<comment type="function">
    <text evidence="1">Catalyzes the transfer of a dimethylallyl group onto the adenine at position 37 in tRNAs that read codons beginning with uridine, leading to the formation of N6-(dimethylallyl)adenosine (i(6)A).</text>
</comment>
<comment type="catalytic activity">
    <reaction evidence="1">
        <text>adenosine(37) in tRNA + dimethylallyl diphosphate = N(6)-dimethylallyladenosine(37) in tRNA + diphosphate</text>
        <dbReference type="Rhea" id="RHEA:26482"/>
        <dbReference type="Rhea" id="RHEA-COMP:10162"/>
        <dbReference type="Rhea" id="RHEA-COMP:10375"/>
        <dbReference type="ChEBI" id="CHEBI:33019"/>
        <dbReference type="ChEBI" id="CHEBI:57623"/>
        <dbReference type="ChEBI" id="CHEBI:74411"/>
        <dbReference type="ChEBI" id="CHEBI:74415"/>
        <dbReference type="EC" id="2.5.1.75"/>
    </reaction>
</comment>
<comment type="cofactor">
    <cofactor evidence="1">
        <name>Mg(2+)</name>
        <dbReference type="ChEBI" id="CHEBI:18420"/>
    </cofactor>
</comment>
<comment type="subunit">
    <text evidence="1">Monomer.</text>
</comment>
<comment type="similarity">
    <text evidence="1">Belongs to the IPP transferase family.</text>
</comment>
<protein>
    <recommendedName>
        <fullName evidence="1">tRNA dimethylallyltransferase</fullName>
        <ecNumber evidence="1">2.5.1.75</ecNumber>
    </recommendedName>
    <alternativeName>
        <fullName evidence="1">Dimethylallyl diphosphate:tRNA dimethylallyltransferase</fullName>
        <shortName evidence="1">DMAPP:tRNA dimethylallyltransferase</shortName>
        <shortName evidence="1">DMATase</shortName>
    </alternativeName>
    <alternativeName>
        <fullName evidence="1">Isopentenyl-diphosphate:tRNA isopentenyltransferase</fullName>
        <shortName evidence="1">IPP transferase</shortName>
        <shortName evidence="1">IPPT</shortName>
        <shortName evidence="1">IPTase</shortName>
    </alternativeName>
</protein>
<dbReference type="EC" id="2.5.1.75" evidence="1"/>
<dbReference type="EMBL" id="CP000507">
    <property type="protein sequence ID" value="ABM01229.1"/>
    <property type="molecule type" value="Genomic_DNA"/>
</dbReference>
<dbReference type="RefSeq" id="WP_011761133.1">
    <property type="nucleotide sequence ID" value="NC_008700.1"/>
</dbReference>
<dbReference type="SMR" id="A1SA22"/>
<dbReference type="STRING" id="326297.Sama_3026"/>
<dbReference type="KEGG" id="saz:Sama_3026"/>
<dbReference type="eggNOG" id="COG0324">
    <property type="taxonomic scope" value="Bacteria"/>
</dbReference>
<dbReference type="HOGENOM" id="CLU_032616_0_0_6"/>
<dbReference type="OrthoDB" id="9776390at2"/>
<dbReference type="Proteomes" id="UP000009175">
    <property type="component" value="Chromosome"/>
</dbReference>
<dbReference type="GO" id="GO:0005524">
    <property type="term" value="F:ATP binding"/>
    <property type="evidence" value="ECO:0007669"/>
    <property type="project" value="UniProtKB-UniRule"/>
</dbReference>
<dbReference type="GO" id="GO:0052381">
    <property type="term" value="F:tRNA dimethylallyltransferase activity"/>
    <property type="evidence" value="ECO:0007669"/>
    <property type="project" value="UniProtKB-UniRule"/>
</dbReference>
<dbReference type="GO" id="GO:0006400">
    <property type="term" value="P:tRNA modification"/>
    <property type="evidence" value="ECO:0007669"/>
    <property type="project" value="TreeGrafter"/>
</dbReference>
<dbReference type="FunFam" id="1.10.20.140:FF:000001">
    <property type="entry name" value="tRNA dimethylallyltransferase"/>
    <property type="match status" value="1"/>
</dbReference>
<dbReference type="Gene3D" id="1.10.20.140">
    <property type="match status" value="1"/>
</dbReference>
<dbReference type="Gene3D" id="3.40.50.300">
    <property type="entry name" value="P-loop containing nucleotide triphosphate hydrolases"/>
    <property type="match status" value="1"/>
</dbReference>
<dbReference type="HAMAP" id="MF_00185">
    <property type="entry name" value="IPP_trans"/>
    <property type="match status" value="1"/>
</dbReference>
<dbReference type="InterPro" id="IPR039657">
    <property type="entry name" value="Dimethylallyltransferase"/>
</dbReference>
<dbReference type="InterPro" id="IPR018022">
    <property type="entry name" value="IPT"/>
</dbReference>
<dbReference type="InterPro" id="IPR027417">
    <property type="entry name" value="P-loop_NTPase"/>
</dbReference>
<dbReference type="NCBIfam" id="TIGR00174">
    <property type="entry name" value="miaA"/>
    <property type="match status" value="1"/>
</dbReference>
<dbReference type="PANTHER" id="PTHR11088">
    <property type="entry name" value="TRNA DIMETHYLALLYLTRANSFERASE"/>
    <property type="match status" value="1"/>
</dbReference>
<dbReference type="PANTHER" id="PTHR11088:SF60">
    <property type="entry name" value="TRNA DIMETHYLALLYLTRANSFERASE"/>
    <property type="match status" value="1"/>
</dbReference>
<dbReference type="Pfam" id="PF01715">
    <property type="entry name" value="IPPT"/>
    <property type="match status" value="1"/>
</dbReference>
<dbReference type="SUPFAM" id="SSF52540">
    <property type="entry name" value="P-loop containing nucleoside triphosphate hydrolases"/>
    <property type="match status" value="1"/>
</dbReference>
<keyword id="KW-0067">ATP-binding</keyword>
<keyword id="KW-0460">Magnesium</keyword>
<keyword id="KW-0547">Nucleotide-binding</keyword>
<keyword id="KW-1185">Reference proteome</keyword>
<keyword id="KW-0808">Transferase</keyword>
<keyword id="KW-0819">tRNA processing</keyword>
<proteinExistence type="inferred from homology"/>
<gene>
    <name evidence="1" type="primary">miaA</name>
    <name type="ordered locus">Sama_3026</name>
</gene>
<accession>A1SA22</accession>
<reference key="1">
    <citation type="submission" date="2006-12" db="EMBL/GenBank/DDBJ databases">
        <title>Complete sequence of Shewanella amazonensis SB2B.</title>
        <authorList>
            <consortium name="US DOE Joint Genome Institute"/>
            <person name="Copeland A."/>
            <person name="Lucas S."/>
            <person name="Lapidus A."/>
            <person name="Barry K."/>
            <person name="Detter J.C."/>
            <person name="Glavina del Rio T."/>
            <person name="Hammon N."/>
            <person name="Israni S."/>
            <person name="Dalin E."/>
            <person name="Tice H."/>
            <person name="Pitluck S."/>
            <person name="Munk A.C."/>
            <person name="Brettin T."/>
            <person name="Bruce D."/>
            <person name="Han C."/>
            <person name="Tapia R."/>
            <person name="Gilna P."/>
            <person name="Schmutz J."/>
            <person name="Larimer F."/>
            <person name="Land M."/>
            <person name="Hauser L."/>
            <person name="Kyrpides N."/>
            <person name="Mikhailova N."/>
            <person name="Fredrickson J."/>
            <person name="Richardson P."/>
        </authorList>
    </citation>
    <scope>NUCLEOTIDE SEQUENCE [LARGE SCALE GENOMIC DNA]</scope>
    <source>
        <strain>ATCC BAA-1098 / SB2B</strain>
    </source>
</reference>
<feature type="chain" id="PRO_1000020655" description="tRNA dimethylallyltransferase">
    <location>
        <begin position="1"/>
        <end position="306"/>
    </location>
</feature>
<feature type="region of interest" description="Interaction with substrate tRNA" evidence="1">
    <location>
        <begin position="37"/>
        <end position="40"/>
    </location>
</feature>
<feature type="region of interest" description="Interaction with substrate tRNA" evidence="1">
    <location>
        <begin position="161"/>
        <end position="165"/>
    </location>
</feature>
<feature type="region of interest" description="Interaction with substrate tRNA" evidence="1">
    <location>
        <begin position="242"/>
        <end position="247"/>
    </location>
</feature>
<feature type="binding site" evidence="1">
    <location>
        <begin position="12"/>
        <end position="19"/>
    </location>
    <ligand>
        <name>ATP</name>
        <dbReference type="ChEBI" id="CHEBI:30616"/>
    </ligand>
</feature>
<feature type="binding site" evidence="1">
    <location>
        <begin position="14"/>
        <end position="19"/>
    </location>
    <ligand>
        <name>substrate</name>
    </ligand>
</feature>
<feature type="site" description="Interaction with substrate tRNA" evidence="1">
    <location>
        <position position="103"/>
    </location>
</feature>
<feature type="site" description="Interaction with substrate tRNA" evidence="1">
    <location>
        <position position="125"/>
    </location>
</feature>
<evidence type="ECO:0000255" key="1">
    <source>
        <dbReference type="HAMAP-Rule" id="MF_00185"/>
    </source>
</evidence>
<organism>
    <name type="scientific">Shewanella amazonensis (strain ATCC BAA-1098 / SB2B)</name>
    <dbReference type="NCBI Taxonomy" id="326297"/>
    <lineage>
        <taxon>Bacteria</taxon>
        <taxon>Pseudomonadati</taxon>
        <taxon>Pseudomonadota</taxon>
        <taxon>Gammaproteobacteria</taxon>
        <taxon>Alteromonadales</taxon>
        <taxon>Shewanellaceae</taxon>
        <taxon>Shewanella</taxon>
    </lineage>
</organism>
<name>MIAA_SHEAM</name>
<sequence length="306" mass="34060">MTSLPKVLFLMGPTASGKTALALDMAEHHNCEIISVDSALIYRGMDIGTAKPTASELARAPHKLIDILDPLESYSAADFRADAVREIEETLSRGKTPLLVGGTMMYFKTLLDGLSPLPSADDAVRAQIAAEVEARGWQALHDELRNIDPVSAERIHPNDPQRLSRAIEVYRISGKTLTELTKIKAESLPYHMVQFAIAPQDRTVLHGLIAKRFQQMLAEGFIGEVETLKARGDLHLELPSMRCVGYRQAWQYLDGEFDHATMVEKAVAATRQLAKRQLTWLRGWPELHWLASGDEGNLDKLVQQSR</sequence>